<accession>Q53B59</accession>
<evidence type="ECO:0000250" key="1"/>
<evidence type="ECO:0000250" key="2">
    <source>
        <dbReference type="UniProtKB" id="P60615"/>
    </source>
</evidence>
<evidence type="ECO:0000269" key="3">
    <source>
    </source>
</evidence>
<evidence type="ECO:0000305" key="4"/>
<protein>
    <recommendedName>
        <fullName>Long neurotoxin OH-37</fullName>
    </recommendedName>
</protein>
<keyword id="KW-0008">Acetylcholine receptor inhibiting toxin</keyword>
<keyword id="KW-0903">Direct protein sequencing</keyword>
<keyword id="KW-1015">Disulfide bond</keyword>
<keyword id="KW-0872">Ion channel impairing toxin</keyword>
<keyword id="KW-0528">Neurotoxin</keyword>
<keyword id="KW-0629">Postsynaptic neurotoxin</keyword>
<keyword id="KW-0964">Secreted</keyword>
<keyword id="KW-0732">Signal</keyword>
<keyword id="KW-0800">Toxin</keyword>
<name>3L237_OPHHA</name>
<sequence length="91" mass="9853">MKTLLLTLVVMTIVCLDLGYSLICFISPHDSVTCAPGENVCFLKSWCDAWCGSRGKKLSFGCAATCPKVNPGIDIECCSTDNCNPHPKLRP</sequence>
<reference key="1">
    <citation type="journal article" date="2004" name="Toxicon">
        <title>Cloning and purification of alpha-neurotoxins from king cobra (Ophiophagus hannah).</title>
        <authorList>
            <person name="He Y.-Y."/>
            <person name="Lee W.-H."/>
            <person name="Zhang Y."/>
        </authorList>
    </citation>
    <scope>NUCLEOTIDE SEQUENCE [MRNA]</scope>
    <scope>PROTEIN SEQUENCE OF 22-38</scope>
    <scope>TOXIC DOSE</scope>
    <scope>SUBCELLULAR LOCATION</scope>
    <source>
        <tissue>Venom</tissue>
        <tissue>Venom gland</tissue>
    </source>
</reference>
<feature type="signal peptide" evidence="3">
    <location>
        <begin position="1"/>
        <end position="21"/>
    </location>
</feature>
<feature type="chain" id="PRO_5000093320" description="Long neurotoxin OH-37">
    <location>
        <begin position="22"/>
        <end position="91"/>
    </location>
</feature>
<feature type="disulfide bond" evidence="1">
    <location>
        <begin position="24"/>
        <end position="41"/>
    </location>
</feature>
<feature type="disulfide bond" evidence="1">
    <location>
        <begin position="34"/>
        <end position="62"/>
    </location>
</feature>
<feature type="disulfide bond" evidence="1">
    <location>
        <begin position="47"/>
        <end position="51"/>
    </location>
</feature>
<feature type="disulfide bond" evidence="1">
    <location>
        <begin position="66"/>
        <end position="77"/>
    </location>
</feature>
<feature type="disulfide bond" evidence="1">
    <location>
        <begin position="78"/>
        <end position="83"/>
    </location>
</feature>
<comment type="function">
    <text evidence="2">Binds with high affinity to muscular (alpha-1/CHRNA1) and neuronal (alpha-7/CHRNA7) nicotinic acetylcholine receptor (nAChR) and inhibits acetylcholine from binding to the receptor, thereby impairing neuromuscular and neuronal transmission.</text>
</comment>
<comment type="subcellular location">
    <subcellularLocation>
        <location evidence="1">Secreted</location>
    </subcellularLocation>
</comment>
<comment type="tissue specificity">
    <text evidence="4">Expressed by the venom gland.</text>
</comment>
<comment type="toxic dose">
    <text evidence="3">LD(50) is 110 ug/kg by intraperitoneal injection into mice.</text>
</comment>
<comment type="similarity">
    <text evidence="4">Belongs to the three-finger toxin family. Long-chain subfamily. Type II alpha-neurotoxin sub-subfamily.</text>
</comment>
<dbReference type="EMBL" id="AY596927">
    <property type="protein sequence ID" value="AAT97249.1"/>
    <property type="molecule type" value="mRNA"/>
</dbReference>
<dbReference type="SMR" id="Q53B59"/>
<dbReference type="TopDownProteomics" id="Q53B59"/>
<dbReference type="GO" id="GO:0005576">
    <property type="term" value="C:extracellular region"/>
    <property type="evidence" value="ECO:0007669"/>
    <property type="project" value="UniProtKB-SubCell"/>
</dbReference>
<dbReference type="GO" id="GO:0030550">
    <property type="term" value="F:acetylcholine receptor inhibitor activity"/>
    <property type="evidence" value="ECO:0007669"/>
    <property type="project" value="UniProtKB-KW"/>
</dbReference>
<dbReference type="GO" id="GO:0099106">
    <property type="term" value="F:ion channel regulator activity"/>
    <property type="evidence" value="ECO:0007669"/>
    <property type="project" value="UniProtKB-KW"/>
</dbReference>
<dbReference type="GO" id="GO:0090729">
    <property type="term" value="F:toxin activity"/>
    <property type="evidence" value="ECO:0007669"/>
    <property type="project" value="UniProtKB-KW"/>
</dbReference>
<dbReference type="CDD" id="cd00206">
    <property type="entry name" value="TFP_snake_toxin"/>
    <property type="match status" value="1"/>
</dbReference>
<dbReference type="Gene3D" id="2.10.60.10">
    <property type="entry name" value="CD59"/>
    <property type="match status" value="1"/>
</dbReference>
<dbReference type="InterPro" id="IPR003571">
    <property type="entry name" value="Snake_3FTx"/>
</dbReference>
<dbReference type="InterPro" id="IPR045860">
    <property type="entry name" value="Snake_toxin-like_sf"/>
</dbReference>
<dbReference type="InterPro" id="IPR018354">
    <property type="entry name" value="Snake_toxin_con_site"/>
</dbReference>
<dbReference type="InterPro" id="IPR054131">
    <property type="entry name" value="Toxin_cobra-type"/>
</dbReference>
<dbReference type="Pfam" id="PF21947">
    <property type="entry name" value="Toxin_cobra-type"/>
    <property type="match status" value="1"/>
</dbReference>
<dbReference type="SUPFAM" id="SSF57302">
    <property type="entry name" value="Snake toxin-like"/>
    <property type="match status" value="1"/>
</dbReference>
<dbReference type="PROSITE" id="PS00272">
    <property type="entry name" value="SNAKE_TOXIN"/>
    <property type="match status" value="1"/>
</dbReference>
<organism>
    <name type="scientific">Ophiophagus hannah</name>
    <name type="common">King cobra</name>
    <name type="synonym">Naja hannah</name>
    <dbReference type="NCBI Taxonomy" id="8665"/>
    <lineage>
        <taxon>Eukaryota</taxon>
        <taxon>Metazoa</taxon>
        <taxon>Chordata</taxon>
        <taxon>Craniata</taxon>
        <taxon>Vertebrata</taxon>
        <taxon>Euteleostomi</taxon>
        <taxon>Lepidosauria</taxon>
        <taxon>Squamata</taxon>
        <taxon>Bifurcata</taxon>
        <taxon>Unidentata</taxon>
        <taxon>Episquamata</taxon>
        <taxon>Toxicofera</taxon>
        <taxon>Serpentes</taxon>
        <taxon>Colubroidea</taxon>
        <taxon>Elapidae</taxon>
        <taxon>Elapinae</taxon>
        <taxon>Ophiophagus</taxon>
    </lineage>
</organism>
<proteinExistence type="evidence at protein level"/>